<sequence length="248" mass="27285">MIEYRIEEAVAKYREFYEFKPVRESAGIEDVKSAIEHTNLKPFATPDDIKKLCLEARENRFHGVCVNPCYVKLAREELEGTDVKVVTVVGFPLGANETRTKAHEAIFAVESGADEIDMVINVGMLKAKEWEYVYEDIRSVVESVKGKVVKVIIETCYLDTEEKIAACVISKLAGAHFVKTSTGFGTGGATAEDVHLMKWIVGDEMGVKASGGIRTFEDAVKMIMYGADRIGTSSGVKIVQGGEERYGG</sequence>
<reference key="1">
    <citation type="journal article" date="1999" name="Nature">
        <title>Evidence for lateral gene transfer between Archaea and Bacteria from genome sequence of Thermotoga maritima.</title>
        <authorList>
            <person name="Nelson K.E."/>
            <person name="Clayton R.A."/>
            <person name="Gill S.R."/>
            <person name="Gwinn M.L."/>
            <person name="Dodson R.J."/>
            <person name="Haft D.H."/>
            <person name="Hickey E.K."/>
            <person name="Peterson J.D."/>
            <person name="Nelson W.C."/>
            <person name="Ketchum K.A."/>
            <person name="McDonald L.A."/>
            <person name="Utterback T.R."/>
            <person name="Malek J.A."/>
            <person name="Linher K.D."/>
            <person name="Garrett M.M."/>
            <person name="Stewart A.M."/>
            <person name="Cotton M.D."/>
            <person name="Pratt M.S."/>
            <person name="Phillips C.A."/>
            <person name="Richardson D.L."/>
            <person name="Heidelberg J.F."/>
            <person name="Sutton G.G."/>
            <person name="Fleischmann R.D."/>
            <person name="Eisen J.A."/>
            <person name="White O."/>
            <person name="Salzberg S.L."/>
            <person name="Smith H.O."/>
            <person name="Venter J.C."/>
            <person name="Fraser C.M."/>
        </authorList>
    </citation>
    <scope>NUCLEOTIDE SEQUENCE [LARGE SCALE GENOMIC DNA]</scope>
    <source>
        <strain>ATCC 43589 / DSM 3109 / JCM 10099 / NBRC 100826 / MSB8</strain>
    </source>
</reference>
<reference key="2">
    <citation type="journal article" date="2007" name="Appl. Environ. Microbiol.">
        <title>Sequential aldol condensation catalyzed by hyperthermophilic 2-deoxy-d-ribose-5-phosphate aldolase.</title>
        <authorList>
            <person name="Sakuraba H."/>
            <person name="Yoneda K."/>
            <person name="Yoshihara K."/>
            <person name="Satoh K."/>
            <person name="Kawakami R."/>
            <person name="Uto Y."/>
            <person name="Tsuge H."/>
            <person name="Takahashi K."/>
            <person name="Hori H."/>
            <person name="Ohshima T."/>
        </authorList>
    </citation>
    <scope>FUNCTION</scope>
    <scope>CATALYTIC ACTIVITY</scope>
    <scope>BIOPHYSICOCHEMICAL PROPERTIES</scope>
</reference>
<reference evidence="5 6" key="3">
    <citation type="submission" date="2011-03" db="PDB data bank">
        <title>Crystal structure of a deoxyribose-phosphate aldolase (TM_1559) from Thermotoga maritima at 1.75 A resolution.</title>
        <authorList>
            <consortium name="Joint center for structural genomics (JCSG)"/>
        </authorList>
    </citation>
    <scope>X-RAY CRYSTALLOGRAPHY (1.75 ANGSTROMS)</scope>
</reference>
<accession>Q9X1P5</accession>
<proteinExistence type="evidence at protein level"/>
<comment type="function">
    <text evidence="1 2">Catalyzes a reversible aldol reaction between acetaldehyde and D-glyceraldehyde 3-phosphate to generate 2-deoxy-D-ribose 5-phosphate.</text>
</comment>
<comment type="catalytic activity">
    <reaction evidence="1 2">
        <text>2-deoxy-D-ribose 5-phosphate = D-glyceraldehyde 3-phosphate + acetaldehyde</text>
        <dbReference type="Rhea" id="RHEA:12821"/>
        <dbReference type="ChEBI" id="CHEBI:15343"/>
        <dbReference type="ChEBI" id="CHEBI:59776"/>
        <dbReference type="ChEBI" id="CHEBI:62877"/>
        <dbReference type="EC" id="4.1.2.4"/>
    </reaction>
</comment>
<comment type="biophysicochemical properties">
    <kinetics>
        <KM evidence="2">0.02 mM for 2-deoxy-D-ribose 5-phosphate</KM>
    </kinetics>
    <phDependence>
        <text evidence="2">Optimum pH is 6.5 for 2-deoxy-D-ribose 5-phosphate cleavage.</text>
    </phDependence>
</comment>
<comment type="pathway">
    <text evidence="1">Carbohydrate degradation; 2-deoxy-D-ribose 1-phosphate degradation; D-glyceraldehyde 3-phosphate and acetaldehyde from 2-deoxy-alpha-D-ribose 1-phosphate: step 2/2.</text>
</comment>
<comment type="subcellular location">
    <subcellularLocation>
        <location evidence="1">Cytoplasm</location>
    </subcellularLocation>
</comment>
<comment type="similarity">
    <text evidence="1 4">Belongs to the DeoC/FbaB aldolase family. DeoC type 1 subfamily.</text>
</comment>
<evidence type="ECO:0000255" key="1">
    <source>
        <dbReference type="HAMAP-Rule" id="MF_00114"/>
    </source>
</evidence>
<evidence type="ECO:0000269" key="2">
    <source>
    </source>
</evidence>
<evidence type="ECO:0000303" key="3">
    <source>
    </source>
</evidence>
<evidence type="ECO:0000305" key="4"/>
<evidence type="ECO:0007744" key="5">
    <source>
        <dbReference type="PDB" id="3R12"/>
    </source>
</evidence>
<evidence type="ECO:0007744" key="6">
    <source>
        <dbReference type="PDB" id="3R13"/>
    </source>
</evidence>
<evidence type="ECO:0007829" key="7">
    <source>
        <dbReference type="PDB" id="3R12"/>
    </source>
</evidence>
<protein>
    <recommendedName>
        <fullName evidence="1">Deoxyribose-phosphate aldolase</fullName>
        <shortName evidence="1 3">DERA</shortName>
        <ecNumber evidence="1 2">4.1.2.4</ecNumber>
    </recommendedName>
    <alternativeName>
        <fullName evidence="1 3">2-deoxy-D-ribose 5-phosphate aldolase</fullName>
    </alternativeName>
    <alternativeName>
        <fullName evidence="1">Phosphodeoxyriboaldolase</fullName>
        <shortName evidence="1">Deoxyriboaldolase</shortName>
    </alternativeName>
</protein>
<keyword id="KW-0002">3D-structure</keyword>
<keyword id="KW-0963">Cytoplasm</keyword>
<keyword id="KW-0456">Lyase</keyword>
<keyword id="KW-1185">Reference proteome</keyword>
<keyword id="KW-0704">Schiff base</keyword>
<dbReference type="EC" id="4.1.2.4" evidence="1 2"/>
<dbReference type="EMBL" id="AE000512">
    <property type="protein sequence ID" value="AAD36625.1"/>
    <property type="molecule type" value="Genomic_DNA"/>
</dbReference>
<dbReference type="PIR" id="B72240">
    <property type="entry name" value="B72240"/>
</dbReference>
<dbReference type="RefSeq" id="NP_229359.1">
    <property type="nucleotide sequence ID" value="NC_000853.1"/>
</dbReference>
<dbReference type="RefSeq" id="WP_004081965.1">
    <property type="nucleotide sequence ID" value="NC_000853.1"/>
</dbReference>
<dbReference type="PDB" id="3R12">
    <property type="method" value="X-ray"/>
    <property type="resolution" value="1.75 A"/>
    <property type="chains" value="A/B=1-248"/>
</dbReference>
<dbReference type="PDB" id="3R13">
    <property type="method" value="X-ray"/>
    <property type="resolution" value="1.83 A"/>
    <property type="chains" value="A/B=1-248"/>
</dbReference>
<dbReference type="PDBsum" id="3R12"/>
<dbReference type="PDBsum" id="3R13"/>
<dbReference type="SMR" id="Q9X1P5"/>
<dbReference type="FunCoup" id="Q9X1P5">
    <property type="interactions" value="210"/>
</dbReference>
<dbReference type="STRING" id="243274.TM_1559"/>
<dbReference type="PaxDb" id="243274-THEMA_06485"/>
<dbReference type="EnsemblBacteria" id="AAD36625">
    <property type="protein sequence ID" value="AAD36625"/>
    <property type="gene ID" value="TM_1559"/>
</dbReference>
<dbReference type="KEGG" id="tma:TM1559"/>
<dbReference type="KEGG" id="tmi:THEMA_06485"/>
<dbReference type="KEGG" id="tmm:Tmari_1567"/>
<dbReference type="KEGG" id="tmw:THMA_1594"/>
<dbReference type="eggNOG" id="COG0274">
    <property type="taxonomic scope" value="Bacteria"/>
</dbReference>
<dbReference type="InParanoid" id="Q9X1P5"/>
<dbReference type="OrthoDB" id="9778711at2"/>
<dbReference type="UniPathway" id="UPA00002">
    <property type="reaction ID" value="UER00468"/>
</dbReference>
<dbReference type="EvolutionaryTrace" id="Q9X1P5"/>
<dbReference type="Proteomes" id="UP000008183">
    <property type="component" value="Chromosome"/>
</dbReference>
<dbReference type="GO" id="GO:0005737">
    <property type="term" value="C:cytoplasm"/>
    <property type="evidence" value="ECO:0007669"/>
    <property type="project" value="UniProtKB-SubCell"/>
</dbReference>
<dbReference type="GO" id="GO:0004139">
    <property type="term" value="F:deoxyribose-phosphate aldolase activity"/>
    <property type="evidence" value="ECO:0000318"/>
    <property type="project" value="GO_Central"/>
</dbReference>
<dbReference type="GO" id="GO:0006018">
    <property type="term" value="P:2-deoxyribose 1-phosphate catabolic process"/>
    <property type="evidence" value="ECO:0007669"/>
    <property type="project" value="UniProtKB-UniRule"/>
</dbReference>
<dbReference type="GO" id="GO:0016052">
    <property type="term" value="P:carbohydrate catabolic process"/>
    <property type="evidence" value="ECO:0000318"/>
    <property type="project" value="GO_Central"/>
</dbReference>
<dbReference type="GO" id="GO:0009264">
    <property type="term" value="P:deoxyribonucleotide catabolic process"/>
    <property type="evidence" value="ECO:0000318"/>
    <property type="project" value="GO_Central"/>
</dbReference>
<dbReference type="CDD" id="cd00959">
    <property type="entry name" value="DeoC"/>
    <property type="match status" value="1"/>
</dbReference>
<dbReference type="FunFam" id="3.20.20.70:FF:000198">
    <property type="entry name" value="Deoxyribose-phosphate aldolase"/>
    <property type="match status" value="1"/>
</dbReference>
<dbReference type="Gene3D" id="3.20.20.70">
    <property type="entry name" value="Aldolase class I"/>
    <property type="match status" value="1"/>
</dbReference>
<dbReference type="HAMAP" id="MF_00114">
    <property type="entry name" value="DeoC_type1"/>
    <property type="match status" value="1"/>
</dbReference>
<dbReference type="InterPro" id="IPR013785">
    <property type="entry name" value="Aldolase_TIM"/>
</dbReference>
<dbReference type="InterPro" id="IPR011343">
    <property type="entry name" value="DeoC"/>
</dbReference>
<dbReference type="InterPro" id="IPR002915">
    <property type="entry name" value="DeoC/FbaB/LacD_aldolase"/>
</dbReference>
<dbReference type="InterPro" id="IPR028581">
    <property type="entry name" value="DeoC_typeI"/>
</dbReference>
<dbReference type="NCBIfam" id="TIGR00126">
    <property type="entry name" value="deoC"/>
    <property type="match status" value="1"/>
</dbReference>
<dbReference type="PANTHER" id="PTHR10889">
    <property type="entry name" value="DEOXYRIBOSE-PHOSPHATE ALDOLASE"/>
    <property type="match status" value="1"/>
</dbReference>
<dbReference type="PANTHER" id="PTHR10889:SF1">
    <property type="entry name" value="DEOXYRIBOSE-PHOSPHATE ALDOLASE"/>
    <property type="match status" value="1"/>
</dbReference>
<dbReference type="Pfam" id="PF01791">
    <property type="entry name" value="DeoC"/>
    <property type="match status" value="1"/>
</dbReference>
<dbReference type="PIRSF" id="PIRSF001357">
    <property type="entry name" value="DeoC"/>
    <property type="match status" value="1"/>
</dbReference>
<dbReference type="SMART" id="SM01133">
    <property type="entry name" value="DeoC"/>
    <property type="match status" value="1"/>
</dbReference>
<dbReference type="SUPFAM" id="SSF51569">
    <property type="entry name" value="Aldolase"/>
    <property type="match status" value="1"/>
</dbReference>
<gene>
    <name evidence="1" type="primary">deoC</name>
    <name type="ordered locus">TM_1559</name>
</gene>
<organism>
    <name type="scientific">Thermotoga maritima (strain ATCC 43589 / DSM 3109 / JCM 10099 / NBRC 100826 / MSB8)</name>
    <dbReference type="NCBI Taxonomy" id="243274"/>
    <lineage>
        <taxon>Bacteria</taxon>
        <taxon>Thermotogati</taxon>
        <taxon>Thermotogota</taxon>
        <taxon>Thermotogae</taxon>
        <taxon>Thermotogales</taxon>
        <taxon>Thermotogaceae</taxon>
        <taxon>Thermotoga</taxon>
    </lineage>
</organism>
<feature type="chain" id="PRO_0000057280" description="Deoxyribose-phosphate aldolase">
    <location>
        <begin position="1"/>
        <end position="248"/>
    </location>
</feature>
<feature type="active site" description="Proton donor/acceptor" evidence="1">
    <location>
        <position position="117"/>
    </location>
</feature>
<feature type="active site" description="Schiff-base intermediate with acetaldehyde" evidence="1">
    <location>
        <position position="179"/>
    </location>
</feature>
<feature type="active site" description="Proton donor/acceptor" evidence="1">
    <location>
        <position position="208"/>
    </location>
</feature>
<feature type="helix" evidence="7">
    <location>
        <begin position="1"/>
        <end position="16"/>
    </location>
</feature>
<feature type="strand" evidence="7">
    <location>
        <begin position="22"/>
        <end position="24"/>
    </location>
</feature>
<feature type="helix" evidence="7">
    <location>
        <begin position="28"/>
        <end position="34"/>
    </location>
</feature>
<feature type="strand" evidence="7">
    <location>
        <begin position="35"/>
        <end position="39"/>
    </location>
</feature>
<feature type="helix" evidence="7">
    <location>
        <begin position="46"/>
        <end position="58"/>
    </location>
</feature>
<feature type="strand" evidence="7">
    <location>
        <begin position="62"/>
        <end position="66"/>
    </location>
</feature>
<feature type="helix" evidence="7">
    <location>
        <begin position="68"/>
        <end position="70"/>
    </location>
</feature>
<feature type="helix" evidence="7">
    <location>
        <begin position="71"/>
        <end position="78"/>
    </location>
</feature>
<feature type="strand" evidence="7">
    <location>
        <begin position="84"/>
        <end position="90"/>
    </location>
</feature>
<feature type="turn" evidence="7">
    <location>
        <begin position="91"/>
        <end position="93"/>
    </location>
</feature>
<feature type="helix" evidence="7">
    <location>
        <begin position="98"/>
        <end position="111"/>
    </location>
</feature>
<feature type="strand" evidence="7">
    <location>
        <begin position="114"/>
        <end position="119"/>
    </location>
</feature>
<feature type="helix" evidence="7">
    <location>
        <begin position="122"/>
        <end position="126"/>
    </location>
</feature>
<feature type="helix" evidence="7">
    <location>
        <begin position="130"/>
        <end position="143"/>
    </location>
</feature>
<feature type="turn" evidence="7">
    <location>
        <begin position="144"/>
        <end position="146"/>
    </location>
</feature>
<feature type="strand" evidence="7">
    <location>
        <begin position="147"/>
        <end position="152"/>
    </location>
</feature>
<feature type="helix" evidence="7">
    <location>
        <begin position="155"/>
        <end position="157"/>
    </location>
</feature>
<feature type="helix" evidence="7">
    <location>
        <begin position="160"/>
        <end position="172"/>
    </location>
</feature>
<feature type="strand" evidence="7">
    <location>
        <begin position="176"/>
        <end position="179"/>
    </location>
</feature>
<feature type="strand" evidence="7">
    <location>
        <begin position="183"/>
        <end position="186"/>
    </location>
</feature>
<feature type="helix" evidence="7">
    <location>
        <begin position="191"/>
        <end position="201"/>
    </location>
</feature>
<feature type="strand" evidence="7">
    <location>
        <begin position="205"/>
        <end position="212"/>
    </location>
</feature>
<feature type="helix" evidence="7">
    <location>
        <begin position="216"/>
        <end position="224"/>
    </location>
</feature>
<feature type="strand" evidence="7">
    <location>
        <begin position="228"/>
        <end position="233"/>
    </location>
</feature>
<feature type="helix" evidence="7">
    <location>
        <begin position="235"/>
        <end position="246"/>
    </location>
</feature>
<name>DEOC_THEMA</name>